<gene>
    <name type="primary">Ca8</name>
    <name type="synonym">Car8</name>
</gene>
<feature type="chain" id="PRO_0000077435" description="Carbonic anhydrase-related protein">
    <location>
        <begin position="1"/>
        <end position="290"/>
    </location>
</feature>
<feature type="domain" description="Alpha-carbonic anhydrase" evidence="3">
    <location>
        <begin position="27"/>
        <end position="289"/>
    </location>
</feature>
<feature type="active site" description="Proton donor/acceptor" evidence="1">
    <location>
        <position position="87"/>
    </location>
</feature>
<feature type="binding site" evidence="2">
    <location>
        <position position="118"/>
    </location>
    <ligand>
        <name>Zn(2+)</name>
        <dbReference type="ChEBI" id="CHEBI:29105"/>
    </ligand>
</feature>
<feature type="binding site" evidence="2">
    <location>
        <position position="141"/>
    </location>
    <ligand>
        <name>Zn(2+)</name>
        <dbReference type="ChEBI" id="CHEBI:29105"/>
    </ligand>
</feature>
<feature type="site" description="Ancestral zinc ligand">
    <location>
        <position position="116"/>
    </location>
</feature>
<feature type="modified residue" description="Phosphoserine" evidence="5">
    <location>
        <position position="5"/>
    </location>
</feature>
<dbReference type="EMBL" id="BC087586">
    <property type="protein sequence ID" value="AAH87586.1"/>
    <property type="molecule type" value="mRNA"/>
</dbReference>
<dbReference type="RefSeq" id="NP_001009662.1">
    <property type="nucleotide sequence ID" value="NM_001009662.1"/>
</dbReference>
<dbReference type="SMR" id="Q5PPN4"/>
<dbReference type="FunCoup" id="Q5PPN4">
    <property type="interactions" value="233"/>
</dbReference>
<dbReference type="STRING" id="10116.ENSRNOP00000007802"/>
<dbReference type="iPTMnet" id="Q5PPN4"/>
<dbReference type="PhosphoSitePlus" id="Q5PPN4"/>
<dbReference type="PaxDb" id="10116-ENSRNOP00000007802"/>
<dbReference type="Ensembl" id="ENSRNOT00000007802.8">
    <property type="protein sequence ID" value="ENSRNOP00000007802.5"/>
    <property type="gene ID" value="ENSRNOG00000005669.8"/>
</dbReference>
<dbReference type="GeneID" id="297814"/>
<dbReference type="KEGG" id="rno:297814"/>
<dbReference type="UCSC" id="RGD:1304709">
    <property type="organism name" value="rat"/>
</dbReference>
<dbReference type="AGR" id="RGD:1304709"/>
<dbReference type="CTD" id="12319"/>
<dbReference type="RGD" id="1304709">
    <property type="gene designation" value="Ca8"/>
</dbReference>
<dbReference type="eggNOG" id="KOG0382">
    <property type="taxonomic scope" value="Eukaryota"/>
</dbReference>
<dbReference type="GeneTree" id="ENSGT00940000158863"/>
<dbReference type="InParanoid" id="Q5PPN4"/>
<dbReference type="OMA" id="CTEGIVW"/>
<dbReference type="OrthoDB" id="429145at2759"/>
<dbReference type="PhylomeDB" id="Q5PPN4"/>
<dbReference type="TreeFam" id="TF316425"/>
<dbReference type="PRO" id="PR:Q5PPN4"/>
<dbReference type="Proteomes" id="UP000002494">
    <property type="component" value="Chromosome 5"/>
</dbReference>
<dbReference type="Bgee" id="ENSRNOG00000005669">
    <property type="expression patterns" value="Expressed in cerebellum and 19 other cell types or tissues"/>
</dbReference>
<dbReference type="ExpressionAtlas" id="Q5PPN4">
    <property type="expression patterns" value="baseline and differential"/>
</dbReference>
<dbReference type="GO" id="GO:0005737">
    <property type="term" value="C:cytoplasm"/>
    <property type="evidence" value="ECO:0000266"/>
    <property type="project" value="RGD"/>
</dbReference>
<dbReference type="GO" id="GO:0004089">
    <property type="term" value="F:carbonate dehydratase activity"/>
    <property type="evidence" value="ECO:0007669"/>
    <property type="project" value="InterPro"/>
</dbReference>
<dbReference type="GO" id="GO:0008270">
    <property type="term" value="F:zinc ion binding"/>
    <property type="evidence" value="ECO:0007669"/>
    <property type="project" value="InterPro"/>
</dbReference>
<dbReference type="GO" id="GO:0050850">
    <property type="term" value="P:positive regulation of calcium-mediated signaling"/>
    <property type="evidence" value="ECO:0000266"/>
    <property type="project" value="RGD"/>
</dbReference>
<dbReference type="CDD" id="cd03120">
    <property type="entry name" value="alpha_CARP_VIII"/>
    <property type="match status" value="1"/>
</dbReference>
<dbReference type="FunFam" id="3.10.200.10:FF:000006">
    <property type="entry name" value="Carbonic anhydrase-related protein-like"/>
    <property type="match status" value="1"/>
</dbReference>
<dbReference type="Gene3D" id="3.10.200.10">
    <property type="entry name" value="Alpha carbonic anhydrase"/>
    <property type="match status" value="1"/>
</dbReference>
<dbReference type="InterPro" id="IPR001148">
    <property type="entry name" value="CA_dom"/>
</dbReference>
<dbReference type="InterPro" id="IPR036398">
    <property type="entry name" value="CA_dom_sf"/>
</dbReference>
<dbReference type="InterPro" id="IPR023561">
    <property type="entry name" value="Carbonic_anhydrase_a-class"/>
</dbReference>
<dbReference type="InterPro" id="IPR018338">
    <property type="entry name" value="Carbonic_anhydrase_a-class_CS"/>
</dbReference>
<dbReference type="InterPro" id="IPR041877">
    <property type="entry name" value="CARP_VIII"/>
</dbReference>
<dbReference type="PANTHER" id="PTHR18952">
    <property type="entry name" value="CARBONIC ANHYDRASE"/>
    <property type="match status" value="1"/>
</dbReference>
<dbReference type="PANTHER" id="PTHR18952:SF104">
    <property type="entry name" value="CARBONIC ANHYDRASE-RELATED PROTEIN"/>
    <property type="match status" value="1"/>
</dbReference>
<dbReference type="Pfam" id="PF00194">
    <property type="entry name" value="Carb_anhydrase"/>
    <property type="match status" value="1"/>
</dbReference>
<dbReference type="SMART" id="SM01057">
    <property type="entry name" value="Carb_anhydrase"/>
    <property type="match status" value="1"/>
</dbReference>
<dbReference type="SUPFAM" id="SSF51069">
    <property type="entry name" value="Carbonic anhydrase"/>
    <property type="match status" value="1"/>
</dbReference>
<dbReference type="PROSITE" id="PS00162">
    <property type="entry name" value="ALPHA_CA_1"/>
    <property type="match status" value="1"/>
</dbReference>
<dbReference type="PROSITE" id="PS51144">
    <property type="entry name" value="ALPHA_CA_2"/>
    <property type="match status" value="1"/>
</dbReference>
<protein>
    <recommendedName>
        <fullName>Carbonic anhydrase-related protein</fullName>
        <shortName>CARP</shortName>
    </recommendedName>
    <alternativeName>
        <fullName>Carbonic anhydrase VIII</fullName>
        <shortName>CA-VIII</shortName>
    </alternativeName>
</protein>
<sequence length="290" mass="32962">MADLSFIEDAVAFPEKEEDEEEEEEGVEWGYEEGVEWGLVFPDANGEYQSPINLNSREARYDPSLLDVRLSPNYVVCRDCEVTNDGHTIQVILKSKSVLSGGPLPQGQEFELYEVRFHWGRENQRGSEHTVNFKAFPMELHLIHWNSTLFGSIDEAVGKPHGIVIIALFVQIGKEHVGLKAVTEILQDIQYKGKSKTIPCFNPNTLLPDPLLRDYWVYEGSLTIPPCSEGVTWILFRYPLTISQLQIEEFRRLRTHVKGAELVEGCDGILGDNFRPTQPLSDRVIRAAFQ</sequence>
<name>CAH8_RAT</name>
<comment type="function">
    <text>Does not have a carbonic anhydrase catalytic activity.</text>
</comment>
<comment type="similarity">
    <text evidence="4">Belongs to the alpha-carbonic anhydrase family.</text>
</comment>
<comment type="caution">
    <text evidence="4">Although it belongs to the alpha-carbonic anhydrase family, Arg-116 is present instead of the conserved His which is a zinc-binding residue. It is therefore expected that this protein lacks carbonic anhydrase activity.</text>
</comment>
<evidence type="ECO:0000250" key="1">
    <source>
        <dbReference type="UniProtKB" id="P00918"/>
    </source>
</evidence>
<evidence type="ECO:0000255" key="2"/>
<evidence type="ECO:0000255" key="3">
    <source>
        <dbReference type="PROSITE-ProRule" id="PRU01134"/>
    </source>
</evidence>
<evidence type="ECO:0000305" key="4"/>
<evidence type="ECO:0007744" key="5">
    <source>
    </source>
</evidence>
<accession>Q5PPN4</accession>
<proteinExistence type="evidence at protein level"/>
<reference key="1">
    <citation type="journal article" date="2004" name="Genome Res.">
        <title>The status, quality, and expansion of the NIH full-length cDNA project: the Mammalian Gene Collection (MGC).</title>
        <authorList>
            <consortium name="The MGC Project Team"/>
        </authorList>
    </citation>
    <scope>NUCLEOTIDE SEQUENCE [LARGE SCALE MRNA]</scope>
    <source>
        <tissue>Brain</tissue>
    </source>
</reference>
<reference key="2">
    <citation type="submission" date="2008-12" db="UniProtKB">
        <authorList>
            <person name="Maurya D.K."/>
            <person name="Bhargava P."/>
        </authorList>
    </citation>
    <scope>IDENTIFICATION BY MASS SPECTROMETRY</scope>
</reference>
<reference key="3">
    <citation type="journal article" date="2012" name="Nat. Commun.">
        <title>Quantitative maps of protein phosphorylation sites across 14 different rat organs and tissues.</title>
        <authorList>
            <person name="Lundby A."/>
            <person name="Secher A."/>
            <person name="Lage K."/>
            <person name="Nordsborg N.B."/>
            <person name="Dmytriyev A."/>
            <person name="Lundby C."/>
            <person name="Olsen J.V."/>
        </authorList>
    </citation>
    <scope>PHOSPHORYLATION [LARGE SCALE ANALYSIS] AT SER-5</scope>
    <scope>IDENTIFICATION BY MASS SPECTROMETRY [LARGE SCALE ANALYSIS]</scope>
</reference>
<keyword id="KW-0479">Metal-binding</keyword>
<keyword id="KW-0597">Phosphoprotein</keyword>
<keyword id="KW-1185">Reference proteome</keyword>
<keyword id="KW-0862">Zinc</keyword>
<organism>
    <name type="scientific">Rattus norvegicus</name>
    <name type="common">Rat</name>
    <dbReference type="NCBI Taxonomy" id="10116"/>
    <lineage>
        <taxon>Eukaryota</taxon>
        <taxon>Metazoa</taxon>
        <taxon>Chordata</taxon>
        <taxon>Craniata</taxon>
        <taxon>Vertebrata</taxon>
        <taxon>Euteleostomi</taxon>
        <taxon>Mammalia</taxon>
        <taxon>Eutheria</taxon>
        <taxon>Euarchontoglires</taxon>
        <taxon>Glires</taxon>
        <taxon>Rodentia</taxon>
        <taxon>Myomorpha</taxon>
        <taxon>Muroidea</taxon>
        <taxon>Muridae</taxon>
        <taxon>Murinae</taxon>
        <taxon>Rattus</taxon>
    </lineage>
</organism>